<protein>
    <recommendedName>
        <fullName>Cycloserine biosynthesis protein DcsG</fullName>
        <ecNumber evidence="3 5">6.3.3.5</ecNumber>
    </recommendedName>
</protein>
<proteinExistence type="evidence at protein level"/>
<feature type="chain" id="PRO_0000424059" description="Cycloserine biosynthesis protein DcsG">
    <location>
        <begin position="1"/>
        <end position="299"/>
    </location>
</feature>
<feature type="domain" description="ATP-grasp" evidence="1">
    <location>
        <begin position="95"/>
        <end position="298"/>
    </location>
</feature>
<feature type="active site" evidence="7">
    <location>
        <position position="220"/>
    </location>
</feature>
<feature type="active site" evidence="7">
    <location>
        <position position="254"/>
    </location>
</feature>
<feature type="active site" evidence="7">
    <location>
        <position position="271"/>
    </location>
</feature>
<feature type="binding site" evidence="5 8">
    <location>
        <position position="92"/>
    </location>
    <ligand>
        <name>ATP</name>
        <dbReference type="ChEBI" id="CHEBI:30616"/>
    </ligand>
</feature>
<feature type="binding site" evidence="5 8">
    <location>
        <position position="137"/>
    </location>
    <ligand>
        <name>ATP</name>
        <dbReference type="ChEBI" id="CHEBI:30616"/>
    </ligand>
</feature>
<feature type="binding site" evidence="5 8">
    <location>
        <position position="144"/>
    </location>
    <ligand>
        <name>ATP</name>
        <dbReference type="ChEBI" id="CHEBI:30616"/>
    </ligand>
</feature>
<feature type="binding site" evidence="5 8">
    <location>
        <position position="175"/>
    </location>
    <ligand>
        <name>ATP</name>
        <dbReference type="ChEBI" id="CHEBI:30616"/>
    </ligand>
</feature>
<feature type="binding site" evidence="5 8">
    <location>
        <position position="176"/>
    </location>
    <ligand>
        <name>ATP</name>
        <dbReference type="ChEBI" id="CHEBI:30616"/>
    </ligand>
</feature>
<feature type="binding site" evidence="5 8">
    <location>
        <position position="178"/>
    </location>
    <ligand>
        <name>ATP</name>
        <dbReference type="ChEBI" id="CHEBI:30616"/>
    </ligand>
</feature>
<feature type="binding site" evidence="5 8">
    <location>
        <position position="269"/>
    </location>
    <ligand>
        <name>Mg(2+)</name>
        <dbReference type="ChEBI" id="CHEBI:18420"/>
        <label>1</label>
    </ligand>
</feature>
<feature type="binding site" evidence="5 8">
    <location>
        <position position="269"/>
    </location>
    <ligand>
        <name>Mg(2+)</name>
        <dbReference type="ChEBI" id="CHEBI:18420"/>
        <label>2</label>
    </ligand>
</feature>
<feature type="binding site" evidence="5 8">
    <location>
        <position position="271"/>
    </location>
    <ligand>
        <name>Mg(2+)</name>
        <dbReference type="ChEBI" id="CHEBI:18420"/>
        <label>1</label>
    </ligand>
</feature>
<feature type="mutagenesis site" description="Loss of enzyme activity." evidence="5">
    <original>W</original>
    <variation>A</variation>
    <location>
        <position position="57"/>
    </location>
</feature>
<feature type="mutagenesis site" description="About 80% activity on D-OUS, 40% on D-homocysteine and beta-aminooxy-D-alanine." evidence="5">
    <original>C</original>
    <variation>A</variation>
    <location>
        <position position="142"/>
    </location>
</feature>
<feature type="mutagenesis site" description="About 15% activity on D-OUS, 5% on D-homocysteine and 30% on beta-aminooxy-D-alanine." evidence="5">
    <original>Y</original>
    <variation>A</variation>
    <location>
        <position position="143"/>
    </location>
</feature>
<feature type="mutagenesis site" description="Nearly complete loss of activity on all substrates." evidence="5">
    <original>K</original>
    <variation>A</variation>
    <location>
        <position position="202"/>
    </location>
</feature>
<feature type="mutagenesis site" description="About 5% activity on D-OUS and beta-aminooxy-D-alanine, nearly complete loss of activity on D-homocysteine." evidence="5">
    <original>P</original>
    <variation>A</variation>
    <location>
        <position position="215"/>
    </location>
</feature>
<feature type="mutagenesis site" description="Nearly complete loss of activity on D-OUS, about 5% activity on D-homocysteine and beta-aminooxy-D-alanine." evidence="5">
    <original>R</original>
    <variation>A</variation>
    <location>
        <position position="220"/>
    </location>
</feature>
<feature type="mutagenesis site" description="Nearly complete loss of activity on all substrates." evidence="5">
    <original>R</original>
    <variation>A</variation>
    <location>
        <position position="254"/>
    </location>
</feature>
<feature type="mutagenesis site" description="Nearly complete loss of activity on all substrates." evidence="5">
    <original>E</original>
    <variation>A</variation>
    <variation>Q</variation>
    <location>
        <position position="271"/>
    </location>
</feature>
<feature type="mutagenesis site" description="About 5% activity on D-OUS, 50% on D-homocysteine and 20% beta-aminooxy-D-alanine." evidence="5">
    <original>S</original>
    <variation>A</variation>
    <location>
        <position position="276"/>
    </location>
</feature>
<feature type="strand" evidence="9">
    <location>
        <begin position="4"/>
        <end position="8"/>
    </location>
</feature>
<feature type="turn" evidence="9">
    <location>
        <begin position="10"/>
        <end position="12"/>
    </location>
</feature>
<feature type="helix" evidence="9">
    <location>
        <begin position="13"/>
        <end position="15"/>
    </location>
</feature>
<feature type="helix" evidence="9">
    <location>
        <begin position="19"/>
        <end position="28"/>
    </location>
</feature>
<feature type="strand" evidence="9">
    <location>
        <begin position="33"/>
        <end position="37"/>
    </location>
</feature>
<feature type="helix" evidence="9">
    <location>
        <begin position="45"/>
        <end position="47"/>
    </location>
</feature>
<feature type="strand" evidence="9">
    <location>
        <begin position="49"/>
        <end position="55"/>
    </location>
</feature>
<feature type="helix" evidence="9">
    <location>
        <begin position="57"/>
        <end position="60"/>
    </location>
</feature>
<feature type="helix" evidence="9">
    <location>
        <begin position="63"/>
        <end position="76"/>
    </location>
</feature>
<feature type="strand" evidence="9">
    <location>
        <begin position="77"/>
        <end position="81"/>
    </location>
</feature>
<feature type="helix" evidence="9">
    <location>
        <begin position="83"/>
        <end position="89"/>
    </location>
</feature>
<feature type="helix" evidence="9">
    <location>
        <begin position="94"/>
        <end position="100"/>
    </location>
</feature>
<feature type="strand" evidence="9">
    <location>
        <begin position="109"/>
        <end position="111"/>
    </location>
</feature>
<feature type="helix" evidence="9">
    <location>
        <begin position="117"/>
        <end position="127"/>
    </location>
</feature>
<feature type="strand" evidence="9">
    <location>
        <begin position="132"/>
        <end position="140"/>
    </location>
</feature>
<feature type="turn" evidence="9">
    <location>
        <begin position="143"/>
        <end position="146"/>
    </location>
</feature>
<feature type="strand" evidence="9">
    <location>
        <begin position="148"/>
        <end position="151"/>
    </location>
</feature>
<feature type="helix" evidence="9">
    <location>
        <begin position="152"/>
        <end position="154"/>
    </location>
</feature>
<feature type="helix" evidence="9">
    <location>
        <begin position="155"/>
        <end position="167"/>
    </location>
</feature>
<feature type="strand" evidence="9">
    <location>
        <begin position="172"/>
        <end position="176"/>
    </location>
</feature>
<feature type="helix" evidence="9">
    <location>
        <begin position="181"/>
        <end position="184"/>
    </location>
</feature>
<feature type="strand" evidence="9">
    <location>
        <begin position="186"/>
        <end position="192"/>
    </location>
</feature>
<feature type="strand" evidence="9">
    <location>
        <begin position="195"/>
        <end position="202"/>
    </location>
</feature>
<feature type="helix" evidence="9">
    <location>
        <begin position="217"/>
        <end position="219"/>
    </location>
</feature>
<feature type="strand" evidence="9">
    <location>
        <begin position="220"/>
        <end position="223"/>
    </location>
</feature>
<feature type="helix" evidence="9">
    <location>
        <begin position="227"/>
        <end position="244"/>
    </location>
</feature>
<feature type="strand" evidence="9">
    <location>
        <begin position="251"/>
        <end position="259"/>
    </location>
</feature>
<feature type="strand" evidence="9">
    <location>
        <begin position="265"/>
        <end position="274"/>
    </location>
</feature>
<feature type="helix" evidence="9">
    <location>
        <begin position="279"/>
        <end position="281"/>
    </location>
</feature>
<feature type="strand" evidence="9">
    <location>
        <begin position="282"/>
        <end position="284"/>
    </location>
</feature>
<feature type="helix" evidence="9">
    <location>
        <begin position="285"/>
        <end position="296"/>
    </location>
</feature>
<keyword id="KW-0002">3D-structure</keyword>
<keyword id="KW-0045">Antibiotic biosynthesis</keyword>
<keyword id="KW-0067">ATP-binding</keyword>
<keyword id="KW-0436">Ligase</keyword>
<keyword id="KW-0460">Magnesium</keyword>
<keyword id="KW-0464">Manganese</keyword>
<keyword id="KW-0479">Metal-binding</keyword>
<keyword id="KW-0547">Nucleotide-binding</keyword>
<comment type="function">
    <text evidence="2 3 5">Involved in the biosynthesis of the antibiotic D-cycloserine (DCS), a cyclic structural analog of D-alanine, used as an antitubercular agent. Catalyzes the synthesis of D-cycloserine from O-ureido-D-serine (D-OUS). It reacts with D-OUS, D-homocysteine and beta-aminooxy-D-alanine.</text>
</comment>
<comment type="catalytic activity">
    <reaction evidence="3">
        <text>O-ureido-D-serine + ATP + H2O + H(+) = D-cycloserine + NH4(+) + ADP + phosphate + CO2</text>
        <dbReference type="Rhea" id="RHEA:36711"/>
        <dbReference type="ChEBI" id="CHEBI:15377"/>
        <dbReference type="ChEBI" id="CHEBI:15378"/>
        <dbReference type="ChEBI" id="CHEBI:16526"/>
        <dbReference type="ChEBI" id="CHEBI:28938"/>
        <dbReference type="ChEBI" id="CHEBI:30616"/>
        <dbReference type="ChEBI" id="CHEBI:43474"/>
        <dbReference type="ChEBI" id="CHEBI:74158"/>
        <dbReference type="ChEBI" id="CHEBI:75929"/>
        <dbReference type="ChEBI" id="CHEBI:456216"/>
        <dbReference type="EC" id="6.3.3.5"/>
    </reaction>
</comment>
<comment type="cofactor">
    <cofactor evidence="5">
        <name>Mg(2+)</name>
        <dbReference type="ChEBI" id="CHEBI:18420"/>
    </cofactor>
    <text evidence="5">Binds 2 Mg(2+) ions per subunit.</text>
</comment>
<comment type="biophysicochemical properties">
    <kinetics>
        <KM evidence="5">2.3 mM for O-ureido-D-serine (D-OUS) in the presence of 5 mM ATP</KM>
        <KM evidence="3 4">10 mM for D-OUS in the presence of 5 mM ATP</KM>
        <KM evidence="3 4">19 mM for D-homocysteine</KM>
        <KM evidence="3 4">73 uM for ATP, in the presence of 50 mM D-OUS</KM>
        <text evidence="3 4">kcat is 2200 sec(-1) with D-OUS as substrate. kcat is 0.86 sec(-1) with D-homocysteine as substrate.</text>
    </kinetics>
    <phDependence>
        <text evidence="3">Optimum pH is 8.0.</text>
    </phDependence>
</comment>
<comment type="subunit">
    <text evidence="3 5">Monomer.</text>
</comment>
<comment type="disruption phenotype">
    <text evidence="2">Cells lacking this gene do not produce cycloserine (DCS).</text>
</comment>
<gene>
    <name evidence="6" type="primary">dcsG</name>
</gene>
<reference key="1">
    <citation type="journal article" date="2010" name="Antimicrob. Agents Chemother.">
        <title>Molecular cloning and heterologous expression of a biosynthetic gene cluster for the antitubercular agent D-cycloserine produced by Streptomyces lavendulae.</title>
        <authorList>
            <person name="Kumagai T."/>
            <person name="Koyama Y."/>
            <person name="Oda K."/>
            <person name="Noda M."/>
            <person name="Matoba Y."/>
            <person name="Sugiyama M."/>
        </authorList>
    </citation>
    <scope>NUCLEOTIDE SEQUENCE [GENOMIC DNA]</scope>
    <scope>FUNCTION IN THE CYCLOSERINE BIOSYNTHESIS</scope>
    <scope>DISRUPTION PHENOTYPE</scope>
    <source>
        <strain>ATCC 11924 / 8197-20</strain>
    </source>
</reference>
<reference key="2">
    <citation type="journal article" date="2013" name="Antimicrob. Agents Chemother.">
        <title>Establishment of an in vitro D-cycloserine-synthesizing system by using O-ureido-L-serine synthase and D-cycloserine synthetase found in the biosynthetic pathway.</title>
        <authorList>
            <person name="Uda N."/>
            <person name="Matoba Y."/>
            <person name="Kumagai T."/>
            <person name="Oda K."/>
            <person name="Noda M."/>
            <person name="Sugiyama M."/>
        </authorList>
    </citation>
    <scope>FUNCTION</scope>
    <scope>CATALYTIC ACTIVITY</scope>
    <scope>SUBSTRATE SPECIFICITY</scope>
    <scope>BIOPHYSICOCHEMICAL PROPERTIES</scope>
    <scope>SUBUNIT</scope>
    <source>
        <strain>ATCC 11924 / 8197-20</strain>
    </source>
</reference>
<reference key="3">
    <citation type="journal article" date="2015" name="Antimicrob. Agents Chemother.">
        <authorList>
            <person name="Uda N."/>
            <person name="Matoba Y."/>
            <person name="Kumagai T."/>
            <person name="Oda K."/>
            <person name="Noda M."/>
            <person name="Sugiyama M."/>
        </authorList>
    </citation>
    <scope>ERRATUM OF PUBMED:23529730</scope>
</reference>
<reference evidence="8" key="4">
    <citation type="journal article" date="2020" name="FEBS J.">
        <title>Cyclization mechanism catalyzed by an ATP-grasp enzyme essential for D-cycloserine biosynthesis.</title>
        <authorList>
            <person name="Matoba Y."/>
            <person name="Uda N."/>
            <person name="Kudo M."/>
            <person name="Sugiyama M."/>
        </authorList>
    </citation>
    <scope>X-RAY CRYSTALLOGRAPHY (2.32 ANGSTROMS) IN COMPLEX WITH ADP AND MG(2+)</scope>
    <scope>FUNCTION</scope>
    <scope>CATALYTIC ACTIVITY</scope>
    <scope>POSSIBLE REACTION MECHANISM</scope>
    <scope>POSSIBLE ACTIVE SITES</scope>
    <scope>COFACTOR</scope>
    <scope>BIOPHYSICOCHEMICAL PROPERTIES</scope>
    <scope>SUBUNIT</scope>
    <scope>MUTAGENESIS OF TRP-57; CYS-142; TYR-143; LYS-202; PRO-215; ARG-220; ARG-254; GLU-271 AND SER-276</scope>
    <source>
        <strain>ATCC 11924 / 8197-20</strain>
    </source>
</reference>
<dbReference type="EC" id="6.3.3.5" evidence="3 5"/>
<dbReference type="EMBL" id="AB516431">
    <property type="protein sequence ID" value="BAI70381.1"/>
    <property type="molecule type" value="Genomic_DNA"/>
</dbReference>
<dbReference type="PDB" id="6JIL">
    <property type="method" value="X-ray"/>
    <property type="resolution" value="2.32 A"/>
    <property type="chains" value="A/B/C/D=1-299"/>
</dbReference>
<dbReference type="PDBsum" id="6JIL"/>
<dbReference type="SMR" id="D2Z030"/>
<dbReference type="KEGG" id="ag:BAI70381"/>
<dbReference type="BioCyc" id="MetaCyc:MONOMER-18019"/>
<dbReference type="BRENDA" id="6.3.3.5">
    <property type="organism ID" value="133"/>
</dbReference>
<dbReference type="GO" id="GO:0005524">
    <property type="term" value="F:ATP binding"/>
    <property type="evidence" value="ECO:0007669"/>
    <property type="project" value="UniProtKB-KW"/>
</dbReference>
<dbReference type="GO" id="GO:0016882">
    <property type="term" value="F:cyclo-ligase activity"/>
    <property type="evidence" value="ECO:0000314"/>
    <property type="project" value="UniProtKB"/>
</dbReference>
<dbReference type="GO" id="GO:0046872">
    <property type="term" value="F:metal ion binding"/>
    <property type="evidence" value="ECO:0007669"/>
    <property type="project" value="UniProtKB-KW"/>
</dbReference>
<dbReference type="GO" id="GO:0017000">
    <property type="term" value="P:antibiotic biosynthetic process"/>
    <property type="evidence" value="ECO:0000315"/>
    <property type="project" value="UniProtKB"/>
</dbReference>
<dbReference type="Gene3D" id="3.40.50.20">
    <property type="match status" value="1"/>
</dbReference>
<dbReference type="Gene3D" id="3.30.1490.20">
    <property type="entry name" value="ATP-grasp fold, A domain"/>
    <property type="match status" value="1"/>
</dbReference>
<dbReference type="Gene3D" id="3.30.470.20">
    <property type="entry name" value="ATP-grasp fold, B domain"/>
    <property type="match status" value="1"/>
</dbReference>
<dbReference type="InterPro" id="IPR011761">
    <property type="entry name" value="ATP-grasp"/>
</dbReference>
<dbReference type="InterPro" id="IPR013815">
    <property type="entry name" value="ATP_grasp_subdomain_1"/>
</dbReference>
<dbReference type="InterPro" id="IPR053191">
    <property type="entry name" value="DcsG_Biosynth_Enzyme"/>
</dbReference>
<dbReference type="PANTHER" id="PTHR39217">
    <property type="match status" value="1"/>
</dbReference>
<dbReference type="PANTHER" id="PTHR39217:SF1">
    <property type="entry name" value="GLUTATHIONE SYNTHETASE"/>
    <property type="match status" value="1"/>
</dbReference>
<dbReference type="SUPFAM" id="SSF56059">
    <property type="entry name" value="Glutathione synthetase ATP-binding domain-like"/>
    <property type="match status" value="1"/>
</dbReference>
<dbReference type="PROSITE" id="PS50975">
    <property type="entry name" value="ATP_GRASP"/>
    <property type="match status" value="1"/>
</dbReference>
<accession>D2Z030</accession>
<organism>
    <name type="scientific">Streptomyces lavendulae</name>
    <dbReference type="NCBI Taxonomy" id="1914"/>
    <lineage>
        <taxon>Bacteria</taxon>
        <taxon>Bacillati</taxon>
        <taxon>Actinomycetota</taxon>
        <taxon>Actinomycetes</taxon>
        <taxon>Kitasatosporales</taxon>
        <taxon>Streptomycetaceae</taxon>
        <taxon>Streptomyces</taxon>
    </lineage>
</organism>
<evidence type="ECO:0000255" key="1">
    <source>
        <dbReference type="PROSITE-ProRule" id="PRU00409"/>
    </source>
</evidence>
<evidence type="ECO:0000269" key="2">
    <source>
    </source>
</evidence>
<evidence type="ECO:0000269" key="3">
    <source>
    </source>
</evidence>
<evidence type="ECO:0000269" key="4">
    <source>
    </source>
</evidence>
<evidence type="ECO:0000269" key="5">
    <source>
    </source>
</evidence>
<evidence type="ECO:0000303" key="6">
    <source>
    </source>
</evidence>
<evidence type="ECO:0000305" key="7">
    <source>
    </source>
</evidence>
<evidence type="ECO:0000312" key="8">
    <source>
        <dbReference type="PDB" id="6JIL"/>
    </source>
</evidence>
<evidence type="ECO:0007829" key="9">
    <source>
        <dbReference type="PDB" id="6JIL"/>
    </source>
</evidence>
<name>DCSG_STRLA</name>
<sequence length="299" mass="32786">MGILALVTDAVSLPIDYDMPPLLEACRTVGITAEVCDWEDGTVDWSRFEAVVFRSPWTWAERQAEFLAFCERVSHVTRLITPMPLVRWALDKRYLADLAAHGVPVIPTTVVAPGSDALAAVRDFLAARPEAREFVVKPTDGCYSKDVQRYQRSLAEPASRHVARLLANGSHVILQPYVESVDRHGETDLTFFDGVYSHAIHKGAMLMPDGTVHVPTLDFRQARDADEDQRAVAAAALAASVAHLGLDLPLVCGRVDLVRGADGSPMVLEMELCEPSLNLTFSEDGALRFAQALAERLKP</sequence>